<geneLocation type="mitochondrion"/>
<accession>Q9B9F6</accession>
<accession>Q85PN2</accession>
<proteinExistence type="inferred from homology"/>
<feature type="chain" id="PRO_0000061026" description="Cytochrome b">
    <location>
        <begin position="1"/>
        <end position="379"/>
    </location>
</feature>
<feature type="transmembrane region" description="Helical" evidence="2">
    <location>
        <begin position="33"/>
        <end position="53"/>
    </location>
</feature>
<feature type="transmembrane region" description="Helical" evidence="2">
    <location>
        <begin position="77"/>
        <end position="98"/>
    </location>
</feature>
<feature type="transmembrane region" description="Helical" evidence="2">
    <location>
        <begin position="113"/>
        <end position="133"/>
    </location>
</feature>
<feature type="transmembrane region" description="Helical" evidence="2">
    <location>
        <begin position="178"/>
        <end position="198"/>
    </location>
</feature>
<feature type="transmembrane region" description="Helical" evidence="2">
    <location>
        <begin position="226"/>
        <end position="246"/>
    </location>
</feature>
<feature type="transmembrane region" description="Helical" evidence="2">
    <location>
        <begin position="288"/>
        <end position="308"/>
    </location>
</feature>
<feature type="transmembrane region" description="Helical" evidence="2">
    <location>
        <begin position="320"/>
        <end position="340"/>
    </location>
</feature>
<feature type="transmembrane region" description="Helical" evidence="2">
    <location>
        <begin position="347"/>
        <end position="367"/>
    </location>
</feature>
<feature type="binding site" description="axial binding residue" evidence="2">
    <location>
        <position position="83"/>
    </location>
    <ligand>
        <name>heme b</name>
        <dbReference type="ChEBI" id="CHEBI:60344"/>
        <label>b562</label>
    </ligand>
    <ligandPart>
        <name>Fe</name>
        <dbReference type="ChEBI" id="CHEBI:18248"/>
    </ligandPart>
</feature>
<feature type="binding site" description="axial binding residue" evidence="2">
    <location>
        <position position="97"/>
    </location>
    <ligand>
        <name>heme b</name>
        <dbReference type="ChEBI" id="CHEBI:60344"/>
        <label>b566</label>
    </ligand>
    <ligandPart>
        <name>Fe</name>
        <dbReference type="ChEBI" id="CHEBI:18248"/>
    </ligandPart>
</feature>
<feature type="binding site" description="axial binding residue" evidence="2">
    <location>
        <position position="182"/>
    </location>
    <ligand>
        <name>heme b</name>
        <dbReference type="ChEBI" id="CHEBI:60344"/>
        <label>b562</label>
    </ligand>
    <ligandPart>
        <name>Fe</name>
        <dbReference type="ChEBI" id="CHEBI:18248"/>
    </ligandPart>
</feature>
<feature type="binding site" description="axial binding residue" evidence="2">
    <location>
        <position position="196"/>
    </location>
    <ligand>
        <name>heme b</name>
        <dbReference type="ChEBI" id="CHEBI:60344"/>
        <label>b566</label>
    </ligand>
    <ligandPart>
        <name>Fe</name>
        <dbReference type="ChEBI" id="CHEBI:18248"/>
    </ligandPart>
</feature>
<feature type="binding site" evidence="2">
    <location>
        <position position="201"/>
    </location>
    <ligand>
        <name>a ubiquinone</name>
        <dbReference type="ChEBI" id="CHEBI:16389"/>
    </ligand>
</feature>
<comment type="function">
    <text evidence="2">Component of the ubiquinol-cytochrome c reductase complex (complex III or cytochrome b-c1 complex) that is part of the mitochondrial respiratory chain. The b-c1 complex mediates electron transfer from ubiquinol to cytochrome c. Contributes to the generation of a proton gradient across the mitochondrial membrane that is then used for ATP synthesis.</text>
</comment>
<comment type="cofactor">
    <cofactor evidence="2">
        <name>heme b</name>
        <dbReference type="ChEBI" id="CHEBI:60344"/>
    </cofactor>
    <text evidence="2">Binds 2 heme b groups non-covalently.</text>
</comment>
<comment type="subunit">
    <text evidence="2">The cytochrome bc1 complex contains 11 subunits: 3 respiratory subunits (MT-CYB, CYC1 and UQCRFS1), 2 core proteins (UQCRC1 and UQCRC2) and 6 low-molecular weight proteins (UQCRH/QCR6, UQCRB/QCR7, UQCRQ/QCR8, UQCR10/QCR9, UQCR11/QCR10 and a cleavage product of UQCRFS1). This cytochrome bc1 complex then forms a dimer.</text>
</comment>
<comment type="subcellular location">
    <subcellularLocation>
        <location evidence="2">Mitochondrion inner membrane</location>
        <topology evidence="2">Multi-pass membrane protein</topology>
    </subcellularLocation>
</comment>
<comment type="miscellaneous">
    <text evidence="1">Heme 1 (or BL or b562) is low-potential and absorbs at about 562 nm, and heme 2 (or BH or b566) is high-potential and absorbs at about 566 nm.</text>
</comment>
<comment type="similarity">
    <text evidence="3 4">Belongs to the cytochrome b family.</text>
</comment>
<comment type="caution">
    <text evidence="2">The full-length protein contains only eight transmembrane helices, not nine as predicted by bioinformatics tools.</text>
</comment>
<gene>
    <name type="primary">MT-CYB</name>
    <name type="synonym">COB</name>
    <name type="synonym">CYTB</name>
    <name type="synonym">MTCYB</name>
</gene>
<reference key="1">
    <citation type="journal article" date="2004" name="Zool. Scr.">
        <title>First molecular evidence for reassessing phylogenetic affinities between genets (Genetta) and the enigmatic genet-like taxa Osbornictis, Poiana and Prionodon (Carnivora, Viverridae).</title>
        <authorList>
            <person name="Gaubert P."/>
            <person name="Tranier M."/>
            <person name="Delmas A.-S."/>
            <person name="Colyn M."/>
            <person name="Veron G."/>
        </authorList>
    </citation>
    <scope>NUCLEOTIDE SEQUENCE [GENOMIC DNA]</scope>
</reference>
<reference key="2">
    <citation type="journal article" date="2003" name="Nature">
        <title>Single origin of Malagasy Carnivora from an African ancestor.</title>
        <authorList>
            <person name="Yoder A.D."/>
            <person name="Burns M.M."/>
            <person name="Zehr S."/>
            <person name="Delefosse T."/>
            <person name="Veron G."/>
            <person name="Goodman S.M."/>
            <person name="Flynn J.J."/>
        </authorList>
    </citation>
    <scope>NUCLEOTIDE SEQUENCE [GENOMIC DNA]</scope>
</reference>
<evidence type="ECO:0000250" key="1"/>
<evidence type="ECO:0000250" key="2">
    <source>
        <dbReference type="UniProtKB" id="P00157"/>
    </source>
</evidence>
<evidence type="ECO:0000255" key="3">
    <source>
        <dbReference type="PROSITE-ProRule" id="PRU00967"/>
    </source>
</evidence>
<evidence type="ECO:0000255" key="4">
    <source>
        <dbReference type="PROSITE-ProRule" id="PRU00968"/>
    </source>
</evidence>
<organism>
    <name type="scientific">Hemigalus derbyanus</name>
    <name type="common">Banded palm civet</name>
    <dbReference type="NCBI Taxonomy" id="94192"/>
    <lineage>
        <taxon>Eukaryota</taxon>
        <taxon>Metazoa</taxon>
        <taxon>Chordata</taxon>
        <taxon>Craniata</taxon>
        <taxon>Vertebrata</taxon>
        <taxon>Euteleostomi</taxon>
        <taxon>Mammalia</taxon>
        <taxon>Eutheria</taxon>
        <taxon>Laurasiatheria</taxon>
        <taxon>Carnivora</taxon>
        <taxon>Feliformia</taxon>
        <taxon>Viverridae</taxon>
        <taxon>Hemigalinae</taxon>
        <taxon>Hemigalus</taxon>
    </lineage>
</organism>
<keyword id="KW-0249">Electron transport</keyword>
<keyword id="KW-0349">Heme</keyword>
<keyword id="KW-0408">Iron</keyword>
<keyword id="KW-0472">Membrane</keyword>
<keyword id="KW-0479">Metal-binding</keyword>
<keyword id="KW-0496">Mitochondrion</keyword>
<keyword id="KW-0999">Mitochondrion inner membrane</keyword>
<keyword id="KW-0679">Respiratory chain</keyword>
<keyword id="KW-0812">Transmembrane</keyword>
<keyword id="KW-1133">Transmembrane helix</keyword>
<keyword id="KW-0813">Transport</keyword>
<keyword id="KW-0830">Ubiquinone</keyword>
<protein>
    <recommendedName>
        <fullName>Cytochrome b</fullName>
    </recommendedName>
    <alternativeName>
        <fullName>Complex III subunit 3</fullName>
    </alternativeName>
    <alternativeName>
        <fullName>Complex III subunit III</fullName>
    </alternativeName>
    <alternativeName>
        <fullName>Cytochrome b-c1 complex subunit 3</fullName>
    </alternativeName>
    <alternativeName>
        <fullName>Ubiquinol-cytochrome-c reductase complex cytochrome b subunit</fullName>
    </alternativeName>
</protein>
<sequence>MTNIRKSHPLAKIINESFIDLPTPSNISAWWNFGSLLGICLILQILTGLFLAMHYTSDTMTAFSSVTHICRDVNYGWIIRYMHANGASLFFICLFMHVGRGMYYGSYTFSETWNIGILLLFSVMATAFMGYVLPWGQMSFWGATVITNLLSAIPYIGTNLVEWIWGGFSVDKATLTRFFAFHFILPFIISALAAVHLLFLHETGSNNPSGMSSDLDKIPFHPYYTIKDILGLLLLIMVLMLLVLFSPDLLGDPDNYTPANPLNTPPHIKPEWYFLFAYAILRSIPNKLGGVLALIMSILILAIIPLLHTSKQRSMMFRPLSQCMFWLLVANLLILTWIGGQPVEHPFITIGQLASMSYFSILLILMPISGIIENHLLKW</sequence>
<dbReference type="EMBL" id="AF125143">
    <property type="protein sequence ID" value="AAG60334.3"/>
    <property type="molecule type" value="Genomic_DNA"/>
</dbReference>
<dbReference type="EMBL" id="AY170109">
    <property type="protein sequence ID" value="AAN85628.1"/>
    <property type="molecule type" value="Genomic_DNA"/>
</dbReference>
<dbReference type="SMR" id="Q9B9F6"/>
<dbReference type="GO" id="GO:0005743">
    <property type="term" value="C:mitochondrial inner membrane"/>
    <property type="evidence" value="ECO:0007669"/>
    <property type="project" value="UniProtKB-SubCell"/>
</dbReference>
<dbReference type="GO" id="GO:0045275">
    <property type="term" value="C:respiratory chain complex III"/>
    <property type="evidence" value="ECO:0007669"/>
    <property type="project" value="InterPro"/>
</dbReference>
<dbReference type="GO" id="GO:0046872">
    <property type="term" value="F:metal ion binding"/>
    <property type="evidence" value="ECO:0007669"/>
    <property type="project" value="UniProtKB-KW"/>
</dbReference>
<dbReference type="GO" id="GO:0008121">
    <property type="term" value="F:ubiquinol-cytochrome-c reductase activity"/>
    <property type="evidence" value="ECO:0007669"/>
    <property type="project" value="InterPro"/>
</dbReference>
<dbReference type="GO" id="GO:0006122">
    <property type="term" value="P:mitochondrial electron transport, ubiquinol to cytochrome c"/>
    <property type="evidence" value="ECO:0007669"/>
    <property type="project" value="TreeGrafter"/>
</dbReference>
<dbReference type="CDD" id="cd00290">
    <property type="entry name" value="cytochrome_b_C"/>
    <property type="match status" value="1"/>
</dbReference>
<dbReference type="CDD" id="cd00284">
    <property type="entry name" value="Cytochrome_b_N"/>
    <property type="match status" value="1"/>
</dbReference>
<dbReference type="FunFam" id="1.20.810.10:FF:000002">
    <property type="entry name" value="Cytochrome b"/>
    <property type="match status" value="1"/>
</dbReference>
<dbReference type="Gene3D" id="1.20.810.10">
    <property type="entry name" value="Cytochrome Bc1 Complex, Chain C"/>
    <property type="match status" value="1"/>
</dbReference>
<dbReference type="InterPro" id="IPR005798">
    <property type="entry name" value="Cyt_b/b6_C"/>
</dbReference>
<dbReference type="InterPro" id="IPR036150">
    <property type="entry name" value="Cyt_b/b6_C_sf"/>
</dbReference>
<dbReference type="InterPro" id="IPR005797">
    <property type="entry name" value="Cyt_b/b6_N"/>
</dbReference>
<dbReference type="InterPro" id="IPR027387">
    <property type="entry name" value="Cytb/b6-like_sf"/>
</dbReference>
<dbReference type="InterPro" id="IPR030689">
    <property type="entry name" value="Cytochrome_b"/>
</dbReference>
<dbReference type="InterPro" id="IPR048260">
    <property type="entry name" value="Cytochrome_b_C_euk/bac"/>
</dbReference>
<dbReference type="InterPro" id="IPR048259">
    <property type="entry name" value="Cytochrome_b_N_euk/bac"/>
</dbReference>
<dbReference type="InterPro" id="IPR016174">
    <property type="entry name" value="Di-haem_cyt_TM"/>
</dbReference>
<dbReference type="PANTHER" id="PTHR19271">
    <property type="entry name" value="CYTOCHROME B"/>
    <property type="match status" value="1"/>
</dbReference>
<dbReference type="PANTHER" id="PTHR19271:SF16">
    <property type="entry name" value="CYTOCHROME B"/>
    <property type="match status" value="1"/>
</dbReference>
<dbReference type="Pfam" id="PF00032">
    <property type="entry name" value="Cytochrom_B_C"/>
    <property type="match status" value="1"/>
</dbReference>
<dbReference type="Pfam" id="PF00033">
    <property type="entry name" value="Cytochrome_B"/>
    <property type="match status" value="1"/>
</dbReference>
<dbReference type="PIRSF" id="PIRSF038885">
    <property type="entry name" value="COB"/>
    <property type="match status" value="1"/>
</dbReference>
<dbReference type="SUPFAM" id="SSF81648">
    <property type="entry name" value="a domain/subunit of cytochrome bc1 complex (Ubiquinol-cytochrome c reductase)"/>
    <property type="match status" value="1"/>
</dbReference>
<dbReference type="SUPFAM" id="SSF81342">
    <property type="entry name" value="Transmembrane di-heme cytochromes"/>
    <property type="match status" value="1"/>
</dbReference>
<dbReference type="PROSITE" id="PS51003">
    <property type="entry name" value="CYTB_CTER"/>
    <property type="match status" value="1"/>
</dbReference>
<dbReference type="PROSITE" id="PS51002">
    <property type="entry name" value="CYTB_NTER"/>
    <property type="match status" value="1"/>
</dbReference>
<name>CYB_HEMDE</name>